<reference key="1">
    <citation type="journal article" date="2003" name="J. Bacteriol.">
        <title>Comparative analyses of the complete genome sequences of Pierce's disease and citrus variegated chlorosis strains of Xylella fastidiosa.</title>
        <authorList>
            <person name="Van Sluys M.A."/>
            <person name="de Oliveira M.C."/>
            <person name="Monteiro-Vitorello C.B."/>
            <person name="Miyaki C.Y."/>
            <person name="Furlan L.R."/>
            <person name="Camargo L.E.A."/>
            <person name="da Silva A.C.R."/>
            <person name="Moon D.H."/>
            <person name="Takita M.A."/>
            <person name="Lemos E.G.M."/>
            <person name="Machado M.A."/>
            <person name="Ferro M.I.T."/>
            <person name="da Silva F.R."/>
            <person name="Goldman M.H.S."/>
            <person name="Goldman G.H."/>
            <person name="Lemos M.V.F."/>
            <person name="El-Dorry H."/>
            <person name="Tsai S.M."/>
            <person name="Carrer H."/>
            <person name="Carraro D.M."/>
            <person name="de Oliveira R.C."/>
            <person name="Nunes L.R."/>
            <person name="Siqueira W.J."/>
            <person name="Coutinho L.L."/>
            <person name="Kimura E.T."/>
            <person name="Ferro E.S."/>
            <person name="Harakava R."/>
            <person name="Kuramae E.E."/>
            <person name="Marino C.L."/>
            <person name="Giglioti E."/>
            <person name="Abreu I.L."/>
            <person name="Alves L.M.C."/>
            <person name="do Amaral A.M."/>
            <person name="Baia G.S."/>
            <person name="Blanco S.R."/>
            <person name="Brito M.S."/>
            <person name="Cannavan F.S."/>
            <person name="Celestino A.V."/>
            <person name="da Cunha A.F."/>
            <person name="Fenille R.C."/>
            <person name="Ferro J.A."/>
            <person name="Formighieri E.F."/>
            <person name="Kishi L.T."/>
            <person name="Leoni S.G."/>
            <person name="Oliveira A.R."/>
            <person name="Rosa V.E. Jr."/>
            <person name="Sassaki F.T."/>
            <person name="Sena J.A.D."/>
            <person name="de Souza A.A."/>
            <person name="Truffi D."/>
            <person name="Tsukumo F."/>
            <person name="Yanai G.M."/>
            <person name="Zaros L.G."/>
            <person name="Civerolo E.L."/>
            <person name="Simpson A.J.G."/>
            <person name="Almeida N.F. Jr."/>
            <person name="Setubal J.C."/>
            <person name="Kitajima J.P."/>
        </authorList>
    </citation>
    <scope>NUCLEOTIDE SEQUENCE [LARGE SCALE GENOMIC DNA]</scope>
    <source>
        <strain>Temecula1 / ATCC 700964</strain>
    </source>
</reference>
<evidence type="ECO:0000255" key="1">
    <source>
        <dbReference type="HAMAP-Rule" id="MF_00045"/>
    </source>
</evidence>
<proteinExistence type="inferred from homology"/>
<name>ORN_XYLFT</name>
<feature type="chain" id="PRO_0000111087" description="Oligoribonuclease">
    <location>
        <begin position="1"/>
        <end position="193"/>
    </location>
</feature>
<feature type="domain" description="Exonuclease" evidence="1">
    <location>
        <begin position="14"/>
        <end position="177"/>
    </location>
</feature>
<feature type="active site" evidence="1">
    <location>
        <position position="135"/>
    </location>
</feature>
<comment type="function">
    <text evidence="1">3'-to-5' exoribonuclease specific for small oligoribonucleotides.</text>
</comment>
<comment type="subcellular location">
    <subcellularLocation>
        <location evidence="1">Cytoplasm</location>
    </subcellularLocation>
</comment>
<comment type="similarity">
    <text evidence="1">Belongs to the oligoribonuclease family.</text>
</comment>
<protein>
    <recommendedName>
        <fullName evidence="1">Oligoribonuclease</fullName>
        <ecNumber evidence="1">3.1.15.-</ecNumber>
    </recommendedName>
</protein>
<keyword id="KW-0963">Cytoplasm</keyword>
<keyword id="KW-0269">Exonuclease</keyword>
<keyword id="KW-0378">Hydrolase</keyword>
<keyword id="KW-0540">Nuclease</keyword>
<keyword id="KW-1185">Reference proteome</keyword>
<organism>
    <name type="scientific">Xylella fastidiosa (strain Temecula1 / ATCC 700964)</name>
    <dbReference type="NCBI Taxonomy" id="183190"/>
    <lineage>
        <taxon>Bacteria</taxon>
        <taxon>Pseudomonadati</taxon>
        <taxon>Pseudomonadota</taxon>
        <taxon>Gammaproteobacteria</taxon>
        <taxon>Lysobacterales</taxon>
        <taxon>Lysobacteraceae</taxon>
        <taxon>Xylella</taxon>
    </lineage>
</organism>
<accession>Q87E07</accession>
<dbReference type="EC" id="3.1.15.-" evidence="1"/>
<dbReference type="EMBL" id="AE009442">
    <property type="protein sequence ID" value="AAO28395.1"/>
    <property type="molecule type" value="Genomic_DNA"/>
</dbReference>
<dbReference type="RefSeq" id="WP_004087374.1">
    <property type="nucleotide sequence ID" value="NC_004556.1"/>
</dbReference>
<dbReference type="SMR" id="Q87E07"/>
<dbReference type="GeneID" id="93904232"/>
<dbReference type="KEGG" id="xft:PD_0522"/>
<dbReference type="HOGENOM" id="CLU_064761_2_0_6"/>
<dbReference type="Proteomes" id="UP000002516">
    <property type="component" value="Chromosome"/>
</dbReference>
<dbReference type="GO" id="GO:0005737">
    <property type="term" value="C:cytoplasm"/>
    <property type="evidence" value="ECO:0007669"/>
    <property type="project" value="UniProtKB-SubCell"/>
</dbReference>
<dbReference type="GO" id="GO:0000175">
    <property type="term" value="F:3'-5'-RNA exonuclease activity"/>
    <property type="evidence" value="ECO:0007669"/>
    <property type="project" value="InterPro"/>
</dbReference>
<dbReference type="GO" id="GO:0003676">
    <property type="term" value="F:nucleic acid binding"/>
    <property type="evidence" value="ECO:0007669"/>
    <property type="project" value="InterPro"/>
</dbReference>
<dbReference type="GO" id="GO:0006259">
    <property type="term" value="P:DNA metabolic process"/>
    <property type="evidence" value="ECO:0007669"/>
    <property type="project" value="UniProtKB-ARBA"/>
</dbReference>
<dbReference type="CDD" id="cd06135">
    <property type="entry name" value="Orn"/>
    <property type="match status" value="1"/>
</dbReference>
<dbReference type="FunFam" id="3.30.420.10:FF:000003">
    <property type="entry name" value="Oligoribonuclease"/>
    <property type="match status" value="1"/>
</dbReference>
<dbReference type="Gene3D" id="3.30.420.10">
    <property type="entry name" value="Ribonuclease H-like superfamily/Ribonuclease H"/>
    <property type="match status" value="1"/>
</dbReference>
<dbReference type="HAMAP" id="MF_00045">
    <property type="entry name" value="Oligoribonuclease"/>
    <property type="match status" value="1"/>
</dbReference>
<dbReference type="InterPro" id="IPR013520">
    <property type="entry name" value="Exonuclease_RNaseT/DNA_pol3"/>
</dbReference>
<dbReference type="InterPro" id="IPR022894">
    <property type="entry name" value="Oligoribonuclease"/>
</dbReference>
<dbReference type="InterPro" id="IPR012337">
    <property type="entry name" value="RNaseH-like_sf"/>
</dbReference>
<dbReference type="InterPro" id="IPR036397">
    <property type="entry name" value="RNaseH_sf"/>
</dbReference>
<dbReference type="NCBIfam" id="NF003765">
    <property type="entry name" value="PRK05359.1"/>
    <property type="match status" value="1"/>
</dbReference>
<dbReference type="PANTHER" id="PTHR11046">
    <property type="entry name" value="OLIGORIBONUCLEASE, MITOCHONDRIAL"/>
    <property type="match status" value="1"/>
</dbReference>
<dbReference type="PANTHER" id="PTHR11046:SF0">
    <property type="entry name" value="OLIGORIBONUCLEASE, MITOCHONDRIAL"/>
    <property type="match status" value="1"/>
</dbReference>
<dbReference type="Pfam" id="PF00929">
    <property type="entry name" value="RNase_T"/>
    <property type="match status" value="1"/>
</dbReference>
<dbReference type="SMART" id="SM00479">
    <property type="entry name" value="EXOIII"/>
    <property type="match status" value="1"/>
</dbReference>
<dbReference type="SUPFAM" id="SSF53098">
    <property type="entry name" value="Ribonuclease H-like"/>
    <property type="match status" value="1"/>
</dbReference>
<gene>
    <name evidence="1" type="primary">orn</name>
    <name type="ordered locus">PD_0522</name>
</gene>
<sequence length="193" mass="21886">MVAELPVVESDRRLIWIDLEMTGLDTHRDSIIEIATVVTDAQLNVLAEGPEFAISHPLNVLEAMDEWNRNQHRHSGLWQRVLNSEIQHAQAEASTIAFLQQWVKIGASPMCGNSICQDRRFLHRQMPCLERYFHYRNLDVSTLKELAGCWSPSILDGVVKTSSHTALSDIYDSIAELRHYRKSMGTFAGLSVV</sequence>